<dbReference type="EC" id="2.7.1.48" evidence="1"/>
<dbReference type="EMBL" id="CP000305">
    <property type="protein sequence ID" value="ABG18784.1"/>
    <property type="molecule type" value="Genomic_DNA"/>
</dbReference>
<dbReference type="EMBL" id="ACNQ01000014">
    <property type="protein sequence ID" value="EEO76022.1"/>
    <property type="molecule type" value="Genomic_DNA"/>
</dbReference>
<dbReference type="RefSeq" id="WP_002211872.1">
    <property type="nucleotide sequence ID" value="NZ_ACNQ01000014.1"/>
</dbReference>
<dbReference type="SMR" id="Q1CGU6"/>
<dbReference type="GeneID" id="57977044"/>
<dbReference type="KEGG" id="ypn:YPN_2456"/>
<dbReference type="HOGENOM" id="CLU_021278_1_2_6"/>
<dbReference type="UniPathway" id="UPA00574">
    <property type="reaction ID" value="UER00637"/>
</dbReference>
<dbReference type="UniPathway" id="UPA00579">
    <property type="reaction ID" value="UER00640"/>
</dbReference>
<dbReference type="Proteomes" id="UP000008936">
    <property type="component" value="Chromosome"/>
</dbReference>
<dbReference type="GO" id="GO:0005737">
    <property type="term" value="C:cytoplasm"/>
    <property type="evidence" value="ECO:0007669"/>
    <property type="project" value="UniProtKB-SubCell"/>
</dbReference>
<dbReference type="GO" id="GO:0005524">
    <property type="term" value="F:ATP binding"/>
    <property type="evidence" value="ECO:0007669"/>
    <property type="project" value="UniProtKB-UniRule"/>
</dbReference>
<dbReference type="GO" id="GO:0043771">
    <property type="term" value="F:cytidine kinase activity"/>
    <property type="evidence" value="ECO:0007669"/>
    <property type="project" value="RHEA"/>
</dbReference>
<dbReference type="GO" id="GO:0004849">
    <property type="term" value="F:uridine kinase activity"/>
    <property type="evidence" value="ECO:0007669"/>
    <property type="project" value="UniProtKB-UniRule"/>
</dbReference>
<dbReference type="GO" id="GO:0044211">
    <property type="term" value="P:CTP salvage"/>
    <property type="evidence" value="ECO:0007669"/>
    <property type="project" value="UniProtKB-UniRule"/>
</dbReference>
<dbReference type="GO" id="GO:0044206">
    <property type="term" value="P:UMP salvage"/>
    <property type="evidence" value="ECO:0007669"/>
    <property type="project" value="UniProtKB-UniRule"/>
</dbReference>
<dbReference type="CDD" id="cd02023">
    <property type="entry name" value="UMPK"/>
    <property type="match status" value="1"/>
</dbReference>
<dbReference type="FunFam" id="3.40.50.300:FF:000252">
    <property type="entry name" value="Uridine kinase"/>
    <property type="match status" value="1"/>
</dbReference>
<dbReference type="Gene3D" id="3.40.50.300">
    <property type="entry name" value="P-loop containing nucleotide triphosphate hydrolases"/>
    <property type="match status" value="1"/>
</dbReference>
<dbReference type="HAMAP" id="MF_00551">
    <property type="entry name" value="Uridine_kinase"/>
    <property type="match status" value="1"/>
</dbReference>
<dbReference type="InterPro" id="IPR027417">
    <property type="entry name" value="P-loop_NTPase"/>
</dbReference>
<dbReference type="InterPro" id="IPR006083">
    <property type="entry name" value="PRK/URK"/>
</dbReference>
<dbReference type="InterPro" id="IPR026008">
    <property type="entry name" value="Uridine_kinase"/>
</dbReference>
<dbReference type="InterPro" id="IPR000764">
    <property type="entry name" value="Uridine_kinase-like"/>
</dbReference>
<dbReference type="NCBIfam" id="NF004018">
    <property type="entry name" value="PRK05480.1"/>
    <property type="match status" value="1"/>
</dbReference>
<dbReference type="NCBIfam" id="TIGR00235">
    <property type="entry name" value="udk"/>
    <property type="match status" value="1"/>
</dbReference>
<dbReference type="PANTHER" id="PTHR10285">
    <property type="entry name" value="URIDINE KINASE"/>
    <property type="match status" value="1"/>
</dbReference>
<dbReference type="Pfam" id="PF00485">
    <property type="entry name" value="PRK"/>
    <property type="match status" value="1"/>
</dbReference>
<dbReference type="PRINTS" id="PR00988">
    <property type="entry name" value="URIDINKINASE"/>
</dbReference>
<dbReference type="SUPFAM" id="SSF52540">
    <property type="entry name" value="P-loop containing nucleoside triphosphate hydrolases"/>
    <property type="match status" value="1"/>
</dbReference>
<reference key="1">
    <citation type="journal article" date="2006" name="J. Bacteriol.">
        <title>Complete genome sequence of Yersinia pestis strains Antiqua and Nepal516: evidence of gene reduction in an emerging pathogen.</title>
        <authorList>
            <person name="Chain P.S.G."/>
            <person name="Hu P."/>
            <person name="Malfatti S.A."/>
            <person name="Radnedge L."/>
            <person name="Larimer F."/>
            <person name="Vergez L.M."/>
            <person name="Worsham P."/>
            <person name="Chu M.C."/>
            <person name="Andersen G.L."/>
        </authorList>
    </citation>
    <scope>NUCLEOTIDE SEQUENCE [LARGE SCALE GENOMIC DNA]</scope>
    <source>
        <strain>Nepal516</strain>
    </source>
</reference>
<reference key="2">
    <citation type="submission" date="2009-04" db="EMBL/GenBank/DDBJ databases">
        <title>Yersinia pestis Nepal516A whole genome shotgun sequencing project.</title>
        <authorList>
            <person name="Plunkett G. III"/>
            <person name="Anderson B.D."/>
            <person name="Baumler D.J."/>
            <person name="Burland V."/>
            <person name="Cabot E.L."/>
            <person name="Glasner J.D."/>
            <person name="Mau B."/>
            <person name="Neeno-Eckwall E."/>
            <person name="Perna N.T."/>
            <person name="Munk A.C."/>
            <person name="Tapia R."/>
            <person name="Green L.D."/>
            <person name="Rogers Y.C."/>
            <person name="Detter J.C."/>
            <person name="Bruce D.C."/>
            <person name="Brettin T.S."/>
        </authorList>
    </citation>
    <scope>NUCLEOTIDE SEQUENCE [LARGE SCALE GENOMIC DNA]</scope>
    <source>
        <strain>Nepal516</strain>
    </source>
</reference>
<evidence type="ECO:0000255" key="1">
    <source>
        <dbReference type="HAMAP-Rule" id="MF_00551"/>
    </source>
</evidence>
<organism>
    <name type="scientific">Yersinia pestis bv. Antiqua (strain Nepal516)</name>
    <dbReference type="NCBI Taxonomy" id="377628"/>
    <lineage>
        <taxon>Bacteria</taxon>
        <taxon>Pseudomonadati</taxon>
        <taxon>Pseudomonadota</taxon>
        <taxon>Gammaproteobacteria</taxon>
        <taxon>Enterobacterales</taxon>
        <taxon>Yersiniaceae</taxon>
        <taxon>Yersinia</taxon>
    </lineage>
</organism>
<name>URK_YERPN</name>
<proteinExistence type="inferred from homology"/>
<accession>Q1CGU6</accession>
<accession>C4GVD8</accession>
<protein>
    <recommendedName>
        <fullName evidence="1">Uridine kinase</fullName>
        <ecNumber evidence="1">2.7.1.48</ecNumber>
    </recommendedName>
    <alternativeName>
        <fullName evidence="1">Cytidine monophosphokinase</fullName>
    </alternativeName>
    <alternativeName>
        <fullName evidence="1">Uridine monophosphokinase</fullName>
    </alternativeName>
</protein>
<comment type="catalytic activity">
    <reaction evidence="1">
        <text>uridine + ATP = UMP + ADP + H(+)</text>
        <dbReference type="Rhea" id="RHEA:16825"/>
        <dbReference type="ChEBI" id="CHEBI:15378"/>
        <dbReference type="ChEBI" id="CHEBI:16704"/>
        <dbReference type="ChEBI" id="CHEBI:30616"/>
        <dbReference type="ChEBI" id="CHEBI:57865"/>
        <dbReference type="ChEBI" id="CHEBI:456216"/>
        <dbReference type="EC" id="2.7.1.48"/>
    </reaction>
</comment>
<comment type="catalytic activity">
    <reaction evidence="1">
        <text>cytidine + ATP = CMP + ADP + H(+)</text>
        <dbReference type="Rhea" id="RHEA:24674"/>
        <dbReference type="ChEBI" id="CHEBI:15378"/>
        <dbReference type="ChEBI" id="CHEBI:17562"/>
        <dbReference type="ChEBI" id="CHEBI:30616"/>
        <dbReference type="ChEBI" id="CHEBI:60377"/>
        <dbReference type="ChEBI" id="CHEBI:456216"/>
        <dbReference type="EC" id="2.7.1.48"/>
    </reaction>
</comment>
<comment type="pathway">
    <text evidence="1">Pyrimidine metabolism; CTP biosynthesis via salvage pathway; CTP from cytidine: step 1/3.</text>
</comment>
<comment type="pathway">
    <text evidence="1">Pyrimidine metabolism; UMP biosynthesis via salvage pathway; UMP from uridine: step 1/1.</text>
</comment>
<comment type="subcellular location">
    <subcellularLocation>
        <location evidence="1">Cytoplasm</location>
    </subcellularLocation>
</comment>
<comment type="similarity">
    <text evidence="1">Belongs to the uridine kinase family.</text>
</comment>
<feature type="chain" id="PRO_1000017917" description="Uridine kinase">
    <location>
        <begin position="1"/>
        <end position="213"/>
    </location>
</feature>
<feature type="binding site" evidence="1">
    <location>
        <begin position="15"/>
        <end position="22"/>
    </location>
    <ligand>
        <name>ATP</name>
        <dbReference type="ChEBI" id="CHEBI:30616"/>
    </ligand>
</feature>
<gene>
    <name evidence="1" type="primary">udk</name>
    <name type="ordered locus">YPN_2456</name>
    <name type="ORF">YP516_2767</name>
</gene>
<keyword id="KW-0067">ATP-binding</keyword>
<keyword id="KW-0963">Cytoplasm</keyword>
<keyword id="KW-0418">Kinase</keyword>
<keyword id="KW-0547">Nucleotide-binding</keyword>
<keyword id="KW-0808">Transferase</keyword>
<sequence length="213" mass="24453">MTDKAHQCVIIGIAGASASGKSLIASTLYRELREQVGDQHIGVIPEDGYYKDQSHLSMEERVKTNYDHPSAMDHNLLLEHLQALKAGKPVELPLYSYTEHTRKKETVHLEPKKVIILEGILLLTDIRLRQEMNFSIFVDTPLDICLMRRMKRDVNERGRSMDSVMAQYQKTVRPMFLQFIEPSKQYADIIVPRGGKNRIAIDILKAKISQFFE</sequence>